<organism>
    <name type="scientific">Haemophilus influenzae (strain ATCC 51907 / DSM 11121 / KW20 / Rd)</name>
    <dbReference type="NCBI Taxonomy" id="71421"/>
    <lineage>
        <taxon>Bacteria</taxon>
        <taxon>Pseudomonadati</taxon>
        <taxon>Pseudomonadota</taxon>
        <taxon>Gammaproteobacteria</taxon>
        <taxon>Pasteurellales</taxon>
        <taxon>Pasteurellaceae</taxon>
        <taxon>Haemophilus</taxon>
    </lineage>
</organism>
<protein>
    <recommendedName>
        <fullName>UPF0225 protein HI_0277</fullName>
    </recommendedName>
</protein>
<feature type="chain" id="PRO_0000071806" description="UPF0225 protein HI_0277">
    <location>
        <begin position="1"/>
        <end position="161"/>
    </location>
</feature>
<gene>
    <name type="ordered locus">HI_0277</name>
</gene>
<sequence>MSEISTALSLENCPCQSSHHYADCCGKFHLRQAFPETAEQLMRSRYTAYVLKNIPYIVVTTVPSQQTLLKPRLLQEWADNTTWLGLEILKTESLTKTQSAVEFKAIFQGEECEQAHQERSIFVKIEDRWYFVDPTVSLPTMKQPCVCGSGKKFKHCCGGFL</sequence>
<comment type="similarity">
    <text evidence="1">Belongs to the UPF0225 family.</text>
</comment>
<dbReference type="EMBL" id="L42023">
    <property type="protein sequence ID" value="AAC21942.1"/>
    <property type="molecule type" value="Genomic_DNA"/>
</dbReference>
<dbReference type="PIR" id="I64146">
    <property type="entry name" value="I64146"/>
</dbReference>
<dbReference type="RefSeq" id="NP_438446.1">
    <property type="nucleotide sequence ID" value="NC_000907.1"/>
</dbReference>
<dbReference type="SMR" id="P44609"/>
<dbReference type="STRING" id="71421.HI_0277"/>
<dbReference type="EnsemblBacteria" id="AAC21942">
    <property type="protein sequence ID" value="AAC21942"/>
    <property type="gene ID" value="HI_0277"/>
</dbReference>
<dbReference type="KEGG" id="hin:HI_0277"/>
<dbReference type="PATRIC" id="fig|71421.8.peg.292"/>
<dbReference type="eggNOG" id="COG3012">
    <property type="taxonomic scope" value="Bacteria"/>
</dbReference>
<dbReference type="HOGENOM" id="CLU_099590_0_1_6"/>
<dbReference type="OrthoDB" id="21421at2"/>
<dbReference type="PhylomeDB" id="P44609"/>
<dbReference type="BioCyc" id="HINF71421:G1GJ1-297-MONOMER"/>
<dbReference type="Proteomes" id="UP000000579">
    <property type="component" value="Chromosome"/>
</dbReference>
<dbReference type="Gene3D" id="3.10.450.50">
    <property type="match status" value="1"/>
</dbReference>
<dbReference type="HAMAP" id="MF_00612">
    <property type="entry name" value="UPF0225"/>
    <property type="match status" value="1"/>
</dbReference>
<dbReference type="InterPro" id="IPR032710">
    <property type="entry name" value="NTF2-like_dom_sf"/>
</dbReference>
<dbReference type="InterPro" id="IPR004027">
    <property type="entry name" value="SEC_C_motif"/>
</dbReference>
<dbReference type="InterPro" id="IPR023006">
    <property type="entry name" value="UPF0225"/>
</dbReference>
<dbReference type="InterPro" id="IPR048469">
    <property type="entry name" value="YchJ-like_M"/>
</dbReference>
<dbReference type="NCBIfam" id="NF001213">
    <property type="entry name" value="PRK00183.1"/>
    <property type="match status" value="1"/>
</dbReference>
<dbReference type="NCBIfam" id="NF002486">
    <property type="entry name" value="PRK01752.1"/>
    <property type="match status" value="1"/>
</dbReference>
<dbReference type="PANTHER" id="PTHR33747:SF1">
    <property type="entry name" value="ADENYLATE CYCLASE-ASSOCIATED CAP C-TERMINAL DOMAIN-CONTAINING PROTEIN"/>
    <property type="match status" value="1"/>
</dbReference>
<dbReference type="PANTHER" id="PTHR33747">
    <property type="entry name" value="UPF0225 PROTEIN SCO1677"/>
    <property type="match status" value="1"/>
</dbReference>
<dbReference type="Pfam" id="PF02810">
    <property type="entry name" value="SEC-C"/>
    <property type="match status" value="1"/>
</dbReference>
<dbReference type="Pfam" id="PF17775">
    <property type="entry name" value="YchJ_M-like"/>
    <property type="match status" value="1"/>
</dbReference>
<dbReference type="SUPFAM" id="SSF54427">
    <property type="entry name" value="NTF2-like"/>
    <property type="match status" value="1"/>
</dbReference>
<dbReference type="SUPFAM" id="SSF103642">
    <property type="entry name" value="Sec-C motif"/>
    <property type="match status" value="1"/>
</dbReference>
<name>Y277_HAEIN</name>
<reference key="1">
    <citation type="journal article" date="1995" name="Science">
        <title>Whole-genome random sequencing and assembly of Haemophilus influenzae Rd.</title>
        <authorList>
            <person name="Fleischmann R.D."/>
            <person name="Adams M.D."/>
            <person name="White O."/>
            <person name="Clayton R.A."/>
            <person name="Kirkness E.F."/>
            <person name="Kerlavage A.R."/>
            <person name="Bult C.J."/>
            <person name="Tomb J.-F."/>
            <person name="Dougherty B.A."/>
            <person name="Merrick J.M."/>
            <person name="McKenney K."/>
            <person name="Sutton G.G."/>
            <person name="FitzHugh W."/>
            <person name="Fields C.A."/>
            <person name="Gocayne J.D."/>
            <person name="Scott J.D."/>
            <person name="Shirley R."/>
            <person name="Liu L.-I."/>
            <person name="Glodek A."/>
            <person name="Kelley J.M."/>
            <person name="Weidman J.F."/>
            <person name="Phillips C.A."/>
            <person name="Spriggs T."/>
            <person name="Hedblom E."/>
            <person name="Cotton M.D."/>
            <person name="Utterback T.R."/>
            <person name="Hanna M.C."/>
            <person name="Nguyen D.T."/>
            <person name="Saudek D.M."/>
            <person name="Brandon R.C."/>
            <person name="Fine L.D."/>
            <person name="Fritchman J.L."/>
            <person name="Fuhrmann J.L."/>
            <person name="Geoghagen N.S.M."/>
            <person name="Gnehm C.L."/>
            <person name="McDonald L.A."/>
            <person name="Small K.V."/>
            <person name="Fraser C.M."/>
            <person name="Smith H.O."/>
            <person name="Venter J.C."/>
        </authorList>
    </citation>
    <scope>NUCLEOTIDE SEQUENCE [LARGE SCALE GENOMIC DNA]</scope>
    <source>
        <strain>ATCC 51907 / DSM 11121 / KW20 / Rd</strain>
    </source>
</reference>
<accession>P44609</accession>
<proteinExistence type="inferred from homology"/>
<keyword id="KW-1185">Reference proteome</keyword>
<evidence type="ECO:0000305" key="1"/>